<organism>
    <name type="scientific">Chlorobium luteolum (strain DSM 273 / BCRC 81028 / 2530)</name>
    <name type="common">Pelodictyon luteolum</name>
    <dbReference type="NCBI Taxonomy" id="319225"/>
    <lineage>
        <taxon>Bacteria</taxon>
        <taxon>Pseudomonadati</taxon>
        <taxon>Chlorobiota</taxon>
        <taxon>Chlorobiia</taxon>
        <taxon>Chlorobiales</taxon>
        <taxon>Chlorobiaceae</taxon>
        <taxon>Chlorobium/Pelodictyon group</taxon>
        <taxon>Pelodictyon</taxon>
    </lineage>
</organism>
<protein>
    <recommendedName>
        <fullName evidence="1">Small ribosomal subunit protein bS21</fullName>
    </recommendedName>
    <alternativeName>
        <fullName evidence="3">30S ribosomal protein S21</fullName>
    </alternativeName>
</protein>
<proteinExistence type="inferred from homology"/>
<dbReference type="EMBL" id="CP000096">
    <property type="protein sequence ID" value="ABB23171.1"/>
    <property type="molecule type" value="Genomic_DNA"/>
</dbReference>
<dbReference type="RefSeq" id="WP_011357046.1">
    <property type="nucleotide sequence ID" value="NC_007512.1"/>
</dbReference>
<dbReference type="SMR" id="Q3B660"/>
<dbReference type="STRING" id="319225.Plut_0283"/>
<dbReference type="KEGG" id="plt:Plut_0283"/>
<dbReference type="eggNOG" id="COG0828">
    <property type="taxonomic scope" value="Bacteria"/>
</dbReference>
<dbReference type="HOGENOM" id="CLU_159258_2_1_10"/>
<dbReference type="OrthoDB" id="598353at2"/>
<dbReference type="Proteomes" id="UP000002709">
    <property type="component" value="Chromosome"/>
</dbReference>
<dbReference type="GO" id="GO:1990904">
    <property type="term" value="C:ribonucleoprotein complex"/>
    <property type="evidence" value="ECO:0007669"/>
    <property type="project" value="UniProtKB-KW"/>
</dbReference>
<dbReference type="GO" id="GO:0005840">
    <property type="term" value="C:ribosome"/>
    <property type="evidence" value="ECO:0007669"/>
    <property type="project" value="UniProtKB-KW"/>
</dbReference>
<dbReference type="GO" id="GO:0003735">
    <property type="term" value="F:structural constituent of ribosome"/>
    <property type="evidence" value="ECO:0007669"/>
    <property type="project" value="InterPro"/>
</dbReference>
<dbReference type="GO" id="GO:0006412">
    <property type="term" value="P:translation"/>
    <property type="evidence" value="ECO:0007669"/>
    <property type="project" value="UniProtKB-UniRule"/>
</dbReference>
<dbReference type="Gene3D" id="1.20.5.1150">
    <property type="entry name" value="Ribosomal protein S8"/>
    <property type="match status" value="1"/>
</dbReference>
<dbReference type="HAMAP" id="MF_00358">
    <property type="entry name" value="Ribosomal_bS21"/>
    <property type="match status" value="1"/>
</dbReference>
<dbReference type="InterPro" id="IPR001911">
    <property type="entry name" value="Ribosomal_bS21"/>
</dbReference>
<dbReference type="InterPro" id="IPR038380">
    <property type="entry name" value="Ribosomal_bS21_sf"/>
</dbReference>
<dbReference type="NCBIfam" id="TIGR00030">
    <property type="entry name" value="S21p"/>
    <property type="match status" value="1"/>
</dbReference>
<dbReference type="Pfam" id="PF01165">
    <property type="entry name" value="Ribosomal_S21"/>
    <property type="match status" value="1"/>
</dbReference>
<dbReference type="PRINTS" id="PR00976">
    <property type="entry name" value="RIBOSOMALS21"/>
</dbReference>
<feature type="chain" id="PRO_0000266723" description="Small ribosomal subunit protein bS21">
    <location>
        <begin position="1"/>
        <end position="65"/>
    </location>
</feature>
<feature type="region of interest" description="Disordered" evidence="2">
    <location>
        <begin position="45"/>
        <end position="65"/>
    </location>
</feature>
<feature type="compositionally biased region" description="Basic residues" evidence="2">
    <location>
        <begin position="48"/>
        <end position="57"/>
    </location>
</feature>
<comment type="similarity">
    <text evidence="1">Belongs to the bacterial ribosomal protein bS21 family.</text>
</comment>
<accession>Q3B660</accession>
<gene>
    <name evidence="1" type="primary">rpsU</name>
    <name type="ordered locus">Plut_0283</name>
</gene>
<reference key="1">
    <citation type="submission" date="2005-08" db="EMBL/GenBank/DDBJ databases">
        <title>Complete sequence of Pelodictyon luteolum DSM 273.</title>
        <authorList>
            <consortium name="US DOE Joint Genome Institute"/>
            <person name="Copeland A."/>
            <person name="Lucas S."/>
            <person name="Lapidus A."/>
            <person name="Barry K."/>
            <person name="Detter J.C."/>
            <person name="Glavina T."/>
            <person name="Hammon N."/>
            <person name="Israni S."/>
            <person name="Pitluck S."/>
            <person name="Bryant D."/>
            <person name="Schmutz J."/>
            <person name="Larimer F."/>
            <person name="Land M."/>
            <person name="Kyrpides N."/>
            <person name="Ivanova N."/>
            <person name="Richardson P."/>
        </authorList>
    </citation>
    <scope>NUCLEOTIDE SEQUENCE [LARGE SCALE GENOMIC DNA]</scope>
    <source>
        <strain>DSM 273 / BCRC 81028 / 2530</strain>
    </source>
</reference>
<keyword id="KW-1185">Reference proteome</keyword>
<keyword id="KW-0687">Ribonucleoprotein</keyword>
<keyword id="KW-0689">Ribosomal protein</keyword>
<name>RS21_CHLL3</name>
<evidence type="ECO:0000255" key="1">
    <source>
        <dbReference type="HAMAP-Rule" id="MF_00358"/>
    </source>
</evidence>
<evidence type="ECO:0000256" key="2">
    <source>
        <dbReference type="SAM" id="MobiDB-lite"/>
    </source>
</evidence>
<evidence type="ECO:0000305" key="3"/>
<sequence length="65" mass="7807">MVSVQMNDNESIDKMLKRFKKKYERAGVLKEFRQNAYFVKPSVDGRLKRSRSKRRAQRANEERNS</sequence>